<keyword id="KW-0963">Cytoplasm</keyword>
<keyword id="KW-0808">Transferase</keyword>
<comment type="function">
    <text evidence="1">Transferase that catalyzes the transfer of sulfur from thiosulfate to thiophilic acceptors such as cyanide or dithiols. May function in a CysM-independent thiosulfate assimilation pathway by catalyzing the conversion of thiosulfate to sulfite, which can then be used for L-cysteine biosynthesis.</text>
</comment>
<comment type="catalytic activity">
    <reaction evidence="1">
        <text>thiosulfate + hydrogen cyanide = thiocyanate + sulfite + 2 H(+)</text>
        <dbReference type="Rhea" id="RHEA:16881"/>
        <dbReference type="ChEBI" id="CHEBI:15378"/>
        <dbReference type="ChEBI" id="CHEBI:17359"/>
        <dbReference type="ChEBI" id="CHEBI:18022"/>
        <dbReference type="ChEBI" id="CHEBI:18407"/>
        <dbReference type="ChEBI" id="CHEBI:33542"/>
        <dbReference type="EC" id="2.8.1.1"/>
    </reaction>
</comment>
<comment type="catalytic activity">
    <reaction evidence="1">
        <text>thiosulfate + [thioredoxin]-dithiol = [thioredoxin]-disulfide + hydrogen sulfide + sulfite + 2 H(+)</text>
        <dbReference type="Rhea" id="RHEA:83859"/>
        <dbReference type="Rhea" id="RHEA-COMP:10698"/>
        <dbReference type="Rhea" id="RHEA-COMP:10700"/>
        <dbReference type="ChEBI" id="CHEBI:15378"/>
        <dbReference type="ChEBI" id="CHEBI:17359"/>
        <dbReference type="ChEBI" id="CHEBI:29919"/>
        <dbReference type="ChEBI" id="CHEBI:29950"/>
        <dbReference type="ChEBI" id="CHEBI:33542"/>
        <dbReference type="ChEBI" id="CHEBI:50058"/>
    </reaction>
</comment>
<comment type="subcellular location">
    <subcellularLocation>
        <location evidence="1">Cytoplasm</location>
    </subcellularLocation>
</comment>
<comment type="similarity">
    <text evidence="1">Belongs to the GlpE family.</text>
</comment>
<accession>Q02TH4</accession>
<organism>
    <name type="scientific">Pseudomonas aeruginosa (strain UCBPP-PA14)</name>
    <dbReference type="NCBI Taxonomy" id="208963"/>
    <lineage>
        <taxon>Bacteria</taxon>
        <taxon>Pseudomonadati</taxon>
        <taxon>Pseudomonadota</taxon>
        <taxon>Gammaproteobacteria</taxon>
        <taxon>Pseudomonadales</taxon>
        <taxon>Pseudomonadaceae</taxon>
        <taxon>Pseudomonas</taxon>
    </lineage>
</organism>
<evidence type="ECO:0000255" key="1">
    <source>
        <dbReference type="HAMAP-Rule" id="MF_01009"/>
    </source>
</evidence>
<proteinExistence type="inferred from homology"/>
<name>GLPE_PSEAB</name>
<sequence length="110" mass="11935">MSDTFQRIAPEQARQLRENGAQVVDIRDPQSFAVGHISGSRHIDNHSVADFIAAADLDAPLVVVCYHGNSSQSAAAYFIQQGFSDVYSLDGGFELWRSVYPADTSSGEAE</sequence>
<reference key="1">
    <citation type="journal article" date="2006" name="Genome Biol.">
        <title>Genomic analysis reveals that Pseudomonas aeruginosa virulence is combinatorial.</title>
        <authorList>
            <person name="Lee D.G."/>
            <person name="Urbach J.M."/>
            <person name="Wu G."/>
            <person name="Liberati N.T."/>
            <person name="Feinbaum R.L."/>
            <person name="Miyata S."/>
            <person name="Diggins L.T."/>
            <person name="He J."/>
            <person name="Saucier M."/>
            <person name="Deziel E."/>
            <person name="Friedman L."/>
            <person name="Li L."/>
            <person name="Grills G."/>
            <person name="Montgomery K."/>
            <person name="Kucherlapati R."/>
            <person name="Rahme L.G."/>
            <person name="Ausubel F.M."/>
        </authorList>
    </citation>
    <scope>NUCLEOTIDE SEQUENCE [LARGE SCALE GENOMIC DNA]</scope>
    <source>
        <strain>UCBPP-PA14</strain>
    </source>
</reference>
<dbReference type="EC" id="2.8.1.1" evidence="1"/>
<dbReference type="EMBL" id="CP000438">
    <property type="protein sequence ID" value="ABJ15553.1"/>
    <property type="molecule type" value="Genomic_DNA"/>
</dbReference>
<dbReference type="RefSeq" id="WP_003099577.1">
    <property type="nucleotide sequence ID" value="NZ_CP034244.1"/>
</dbReference>
<dbReference type="SMR" id="Q02TH4"/>
<dbReference type="KEGG" id="pau:PA14_07690"/>
<dbReference type="PseudoCAP" id="PA14_07690"/>
<dbReference type="HOGENOM" id="CLU_089574_14_0_6"/>
<dbReference type="BioCyc" id="PAER208963:G1G74-634-MONOMER"/>
<dbReference type="Proteomes" id="UP000000653">
    <property type="component" value="Chromosome"/>
</dbReference>
<dbReference type="GO" id="GO:0005737">
    <property type="term" value="C:cytoplasm"/>
    <property type="evidence" value="ECO:0007669"/>
    <property type="project" value="UniProtKB-SubCell"/>
</dbReference>
<dbReference type="GO" id="GO:0004792">
    <property type="term" value="F:thiosulfate-cyanide sulfurtransferase activity"/>
    <property type="evidence" value="ECO:0007669"/>
    <property type="project" value="UniProtKB-UniRule"/>
</dbReference>
<dbReference type="GO" id="GO:0006071">
    <property type="term" value="P:glycerol metabolic process"/>
    <property type="evidence" value="ECO:0007669"/>
    <property type="project" value="UniProtKB-UniRule"/>
</dbReference>
<dbReference type="CDD" id="cd01444">
    <property type="entry name" value="GlpE_ST"/>
    <property type="match status" value="1"/>
</dbReference>
<dbReference type="Gene3D" id="3.40.250.10">
    <property type="entry name" value="Rhodanese-like domain"/>
    <property type="match status" value="1"/>
</dbReference>
<dbReference type="HAMAP" id="MF_01009">
    <property type="entry name" value="Thiosulf_sulfurtr"/>
    <property type="match status" value="1"/>
</dbReference>
<dbReference type="InterPro" id="IPR050229">
    <property type="entry name" value="GlpE_sulfurtransferase"/>
</dbReference>
<dbReference type="InterPro" id="IPR001763">
    <property type="entry name" value="Rhodanese-like_dom"/>
</dbReference>
<dbReference type="InterPro" id="IPR036873">
    <property type="entry name" value="Rhodanese-like_dom_sf"/>
</dbReference>
<dbReference type="InterPro" id="IPR023695">
    <property type="entry name" value="Thiosulf_sulfurTrfase"/>
</dbReference>
<dbReference type="NCBIfam" id="NF001195">
    <property type="entry name" value="PRK00162.1"/>
    <property type="match status" value="1"/>
</dbReference>
<dbReference type="PANTHER" id="PTHR43031">
    <property type="entry name" value="FAD-DEPENDENT OXIDOREDUCTASE"/>
    <property type="match status" value="1"/>
</dbReference>
<dbReference type="PANTHER" id="PTHR43031:SF6">
    <property type="entry name" value="THIOSULFATE SULFURTRANSFERASE GLPE"/>
    <property type="match status" value="1"/>
</dbReference>
<dbReference type="Pfam" id="PF00581">
    <property type="entry name" value="Rhodanese"/>
    <property type="match status" value="1"/>
</dbReference>
<dbReference type="SMART" id="SM00450">
    <property type="entry name" value="RHOD"/>
    <property type="match status" value="1"/>
</dbReference>
<dbReference type="SUPFAM" id="SSF52821">
    <property type="entry name" value="Rhodanese/Cell cycle control phosphatase"/>
    <property type="match status" value="1"/>
</dbReference>
<dbReference type="PROSITE" id="PS50206">
    <property type="entry name" value="RHODANESE_3"/>
    <property type="match status" value="1"/>
</dbReference>
<feature type="chain" id="PRO_1000062968" description="Thiosulfate sulfurtransferase GlpE">
    <location>
        <begin position="1"/>
        <end position="110"/>
    </location>
</feature>
<feature type="domain" description="Rhodanese" evidence="1">
    <location>
        <begin position="17"/>
        <end position="105"/>
    </location>
</feature>
<feature type="active site" description="Cysteine persulfide intermediate" evidence="1">
    <location>
        <position position="65"/>
    </location>
</feature>
<gene>
    <name evidence="1" type="primary">glpE</name>
    <name type="ordered locus">PA14_07690</name>
</gene>
<protein>
    <recommendedName>
        <fullName evidence="1">Thiosulfate sulfurtransferase GlpE</fullName>
        <ecNumber evidence="1">2.8.1.1</ecNumber>
    </recommendedName>
</protein>